<reference key="1">
    <citation type="journal article" date="2006" name="PLoS Genet.">
        <title>Genome sequence of Rickettsia bellii illuminates the role of amoebae in gene exchanges between intracellular pathogens.</title>
        <authorList>
            <person name="Ogata H."/>
            <person name="La Scola B."/>
            <person name="Audic S."/>
            <person name="Renesto P."/>
            <person name="Blanc G."/>
            <person name="Robert C."/>
            <person name="Fournier P.-E."/>
            <person name="Claverie J.-M."/>
            <person name="Raoult D."/>
        </authorList>
    </citation>
    <scope>NUCLEOTIDE SEQUENCE [LARGE SCALE GENOMIC DNA]</scope>
    <source>
        <strain>RML369-C</strain>
    </source>
</reference>
<name>SURF1_RICBR</name>
<gene>
    <name type="ordered locus">RBE_0359</name>
</gene>
<dbReference type="EMBL" id="CP000087">
    <property type="protein sequence ID" value="ABE04440.1"/>
    <property type="molecule type" value="Genomic_DNA"/>
</dbReference>
<dbReference type="RefSeq" id="WP_011477049.1">
    <property type="nucleotide sequence ID" value="NC_007940.1"/>
</dbReference>
<dbReference type="SMR" id="Q1RJM4"/>
<dbReference type="KEGG" id="rbe:RBE_0359"/>
<dbReference type="eggNOG" id="COG3346">
    <property type="taxonomic scope" value="Bacteria"/>
</dbReference>
<dbReference type="HOGENOM" id="CLU_047737_4_1_5"/>
<dbReference type="OrthoDB" id="6079986at2"/>
<dbReference type="Proteomes" id="UP000001951">
    <property type="component" value="Chromosome"/>
</dbReference>
<dbReference type="GO" id="GO:0005886">
    <property type="term" value="C:plasma membrane"/>
    <property type="evidence" value="ECO:0007669"/>
    <property type="project" value="UniProtKB-SubCell"/>
</dbReference>
<dbReference type="CDD" id="cd06662">
    <property type="entry name" value="SURF1"/>
    <property type="match status" value="1"/>
</dbReference>
<dbReference type="InterPro" id="IPR002994">
    <property type="entry name" value="Surf1/Shy1"/>
</dbReference>
<dbReference type="InterPro" id="IPR045214">
    <property type="entry name" value="Surf1/Surf4"/>
</dbReference>
<dbReference type="PANTHER" id="PTHR23427">
    <property type="entry name" value="SURFEIT LOCUS PROTEIN"/>
    <property type="match status" value="1"/>
</dbReference>
<dbReference type="PANTHER" id="PTHR23427:SF2">
    <property type="entry name" value="SURFEIT LOCUS PROTEIN 1"/>
    <property type="match status" value="1"/>
</dbReference>
<dbReference type="Pfam" id="PF02104">
    <property type="entry name" value="SURF1"/>
    <property type="match status" value="1"/>
</dbReference>
<dbReference type="PROSITE" id="PS50895">
    <property type="entry name" value="SURF1"/>
    <property type="match status" value="1"/>
</dbReference>
<evidence type="ECO:0000255" key="1"/>
<evidence type="ECO:0000305" key="2"/>
<protein>
    <recommendedName>
        <fullName>SURF1-like protein</fullName>
    </recommendedName>
</protein>
<proteinExistence type="inferred from homology"/>
<sequence>MKTKLTVLITFIILVLLGFWQLNRLKEKKLFLASMQENLTSPAIDLAKIQDNLPYHKVKITGHFLPDKDIYLYGRRSMSSEKDGYYLVTPFKTDEDKIILVARGWFSNRNKNIITQATNDQPHELIGVTMPSEKTRSYLPANDIKNNVWLTLDLQEASKVLGLNLENFYLIEESKDISNLDILLPLSINHLAAIRNDHLEYAFTWFGLAASLVVIYRIYKRSVSSRGLETRSRIKQDKSSF</sequence>
<accession>Q1RJM4</accession>
<organism>
    <name type="scientific">Rickettsia bellii (strain RML369-C)</name>
    <dbReference type="NCBI Taxonomy" id="336407"/>
    <lineage>
        <taxon>Bacteria</taxon>
        <taxon>Pseudomonadati</taxon>
        <taxon>Pseudomonadota</taxon>
        <taxon>Alphaproteobacteria</taxon>
        <taxon>Rickettsiales</taxon>
        <taxon>Rickettsiaceae</taxon>
        <taxon>Rickettsieae</taxon>
        <taxon>Rickettsia</taxon>
        <taxon>belli group</taxon>
    </lineage>
</organism>
<comment type="subcellular location">
    <subcellularLocation>
        <location evidence="2">Cell membrane</location>
        <topology evidence="2">Multi-pass membrane protein</topology>
    </subcellularLocation>
</comment>
<comment type="similarity">
    <text evidence="2">Belongs to the SURF1 family.</text>
</comment>
<feature type="chain" id="PRO_0000293030" description="SURF1-like protein">
    <location>
        <begin position="1"/>
        <end position="241"/>
    </location>
</feature>
<feature type="transmembrane region" description="Helical" evidence="1">
    <location>
        <begin position="5"/>
        <end position="25"/>
    </location>
</feature>
<feature type="transmembrane region" description="Helical" evidence="1">
    <location>
        <begin position="199"/>
        <end position="219"/>
    </location>
</feature>
<keyword id="KW-1003">Cell membrane</keyword>
<keyword id="KW-0472">Membrane</keyword>
<keyword id="KW-0812">Transmembrane</keyword>
<keyword id="KW-1133">Transmembrane helix</keyword>